<comment type="catalytic activity">
    <reaction evidence="1">
        <text>adenine + H2O + H(+) = hypoxanthine + NH4(+)</text>
        <dbReference type="Rhea" id="RHEA:23688"/>
        <dbReference type="ChEBI" id="CHEBI:15377"/>
        <dbReference type="ChEBI" id="CHEBI:15378"/>
        <dbReference type="ChEBI" id="CHEBI:16708"/>
        <dbReference type="ChEBI" id="CHEBI:17368"/>
        <dbReference type="ChEBI" id="CHEBI:28938"/>
        <dbReference type="EC" id="3.5.4.2"/>
    </reaction>
</comment>
<comment type="cofactor">
    <cofactor evidence="1">
        <name>Mn(2+)</name>
        <dbReference type="ChEBI" id="CHEBI:29035"/>
    </cofactor>
</comment>
<comment type="similarity">
    <text evidence="2">Belongs to the metallo-dependent hydrolases superfamily. Adenine deaminase family.</text>
</comment>
<feature type="chain" id="PRO_0000142404" description="Adenine deaminase">
    <location>
        <begin position="1"/>
        <end position="577"/>
    </location>
</feature>
<feature type="sequence conflict" description="In Ref. 2; CAA58726." evidence="2" ref="2">
    <original>A</original>
    <variation>G</variation>
    <location>
        <position position="193"/>
    </location>
</feature>
<feature type="sequence conflict" description="In Ref. 2; CAA58726." evidence="2" ref="2">
    <original>D</original>
    <variation>Y</variation>
    <location>
        <position position="231"/>
    </location>
</feature>
<feature type="sequence conflict" description="In Ref. 1; BAA07052 and 3; AAC24927." evidence="2" ref="1 3">
    <original>ARRF</original>
    <variation>RTPV</variation>
    <location>
        <begin position="262"/>
        <end position="265"/>
    </location>
</feature>
<accession>P39761</accession>
<proteinExistence type="evidence at protein level"/>
<evidence type="ECO:0000269" key="1">
    <source>
    </source>
</evidence>
<evidence type="ECO:0000305" key="2"/>
<protein>
    <recommendedName>
        <fullName>Adenine deaminase</fullName>
        <shortName>Adenase</shortName>
        <shortName>Adenine aminase</shortName>
        <ecNumber>3.5.4.2</ecNumber>
    </recommendedName>
</protein>
<organism>
    <name type="scientific">Bacillus subtilis (strain 168)</name>
    <dbReference type="NCBI Taxonomy" id="224308"/>
    <lineage>
        <taxon>Bacteria</taxon>
        <taxon>Bacillati</taxon>
        <taxon>Bacillota</taxon>
        <taxon>Bacilli</taxon>
        <taxon>Bacillales</taxon>
        <taxon>Bacillaceae</taxon>
        <taxon>Bacillus</taxon>
    </lineage>
</organism>
<reference key="1">
    <citation type="submission" date="1994-07" db="EMBL/GenBank/DDBJ databases">
        <title>The nucleotide sequence analysis of kinC region.</title>
        <authorList>
            <person name="Kobayashi K."/>
            <person name="Sato T."/>
            <person name="Kobayashi Y."/>
        </authorList>
    </citation>
    <scope>NUCLEOTIDE SEQUENCE [GENOMIC DNA]</scope>
    <source>
        <strain>168 / JH642</strain>
    </source>
</reference>
<reference key="2">
    <citation type="journal article" date="1996" name="J. Bacteriol.">
        <title>Role of adenine deaminase in purine salvage and nitrogen metabolism and characterization of the ade gene in Bacillus subtilis.</title>
        <authorList>
            <person name="Nygaard P."/>
            <person name="Duckert P."/>
            <person name="Saxild H.H."/>
        </authorList>
    </citation>
    <scope>NUCLEOTIDE SEQUENCE [GENOMIC DNA]</scope>
    <scope>CATALYTIC ACTIVITY</scope>
    <scope>COFACTOR</scope>
    <source>
        <strain>168</strain>
    </source>
</reference>
<reference key="3">
    <citation type="journal article" date="1996" name="Microbiology">
        <title>The ampS-nprE (124 degrees-127 degrees) region of the Bacillus subtilis 168 chromosome: sequencing of a 27 kb segment and identification of several genes in the area.</title>
        <authorList>
            <person name="Winters P."/>
            <person name="Caldwell R.M."/>
            <person name="Enfield L."/>
            <person name="Ferrari E."/>
        </authorList>
    </citation>
    <scope>NUCLEOTIDE SEQUENCE [GENOMIC DNA]</scope>
    <source>
        <strain>168</strain>
    </source>
</reference>
<reference key="4">
    <citation type="journal article" date="1997" name="Nature">
        <title>The complete genome sequence of the Gram-positive bacterium Bacillus subtilis.</title>
        <authorList>
            <person name="Kunst F."/>
            <person name="Ogasawara N."/>
            <person name="Moszer I."/>
            <person name="Albertini A.M."/>
            <person name="Alloni G."/>
            <person name="Azevedo V."/>
            <person name="Bertero M.G."/>
            <person name="Bessieres P."/>
            <person name="Bolotin A."/>
            <person name="Borchert S."/>
            <person name="Borriss R."/>
            <person name="Boursier L."/>
            <person name="Brans A."/>
            <person name="Braun M."/>
            <person name="Brignell S.C."/>
            <person name="Bron S."/>
            <person name="Brouillet S."/>
            <person name="Bruschi C.V."/>
            <person name="Caldwell B."/>
            <person name="Capuano V."/>
            <person name="Carter N.M."/>
            <person name="Choi S.-K."/>
            <person name="Codani J.-J."/>
            <person name="Connerton I.F."/>
            <person name="Cummings N.J."/>
            <person name="Daniel R.A."/>
            <person name="Denizot F."/>
            <person name="Devine K.M."/>
            <person name="Duesterhoeft A."/>
            <person name="Ehrlich S.D."/>
            <person name="Emmerson P.T."/>
            <person name="Entian K.-D."/>
            <person name="Errington J."/>
            <person name="Fabret C."/>
            <person name="Ferrari E."/>
            <person name="Foulger D."/>
            <person name="Fritz C."/>
            <person name="Fujita M."/>
            <person name="Fujita Y."/>
            <person name="Fuma S."/>
            <person name="Galizzi A."/>
            <person name="Galleron N."/>
            <person name="Ghim S.-Y."/>
            <person name="Glaser P."/>
            <person name="Goffeau A."/>
            <person name="Golightly E.J."/>
            <person name="Grandi G."/>
            <person name="Guiseppi G."/>
            <person name="Guy B.J."/>
            <person name="Haga K."/>
            <person name="Haiech J."/>
            <person name="Harwood C.R."/>
            <person name="Henaut A."/>
            <person name="Hilbert H."/>
            <person name="Holsappel S."/>
            <person name="Hosono S."/>
            <person name="Hullo M.-F."/>
            <person name="Itaya M."/>
            <person name="Jones L.-M."/>
            <person name="Joris B."/>
            <person name="Karamata D."/>
            <person name="Kasahara Y."/>
            <person name="Klaerr-Blanchard M."/>
            <person name="Klein C."/>
            <person name="Kobayashi Y."/>
            <person name="Koetter P."/>
            <person name="Koningstein G."/>
            <person name="Krogh S."/>
            <person name="Kumano M."/>
            <person name="Kurita K."/>
            <person name="Lapidus A."/>
            <person name="Lardinois S."/>
            <person name="Lauber J."/>
            <person name="Lazarevic V."/>
            <person name="Lee S.-M."/>
            <person name="Levine A."/>
            <person name="Liu H."/>
            <person name="Masuda S."/>
            <person name="Mauel C."/>
            <person name="Medigue C."/>
            <person name="Medina N."/>
            <person name="Mellado R.P."/>
            <person name="Mizuno M."/>
            <person name="Moestl D."/>
            <person name="Nakai S."/>
            <person name="Noback M."/>
            <person name="Noone D."/>
            <person name="O'Reilly M."/>
            <person name="Ogawa K."/>
            <person name="Ogiwara A."/>
            <person name="Oudega B."/>
            <person name="Park S.-H."/>
            <person name="Parro V."/>
            <person name="Pohl T.M."/>
            <person name="Portetelle D."/>
            <person name="Porwollik S."/>
            <person name="Prescott A.M."/>
            <person name="Presecan E."/>
            <person name="Pujic P."/>
            <person name="Purnelle B."/>
            <person name="Rapoport G."/>
            <person name="Rey M."/>
            <person name="Reynolds S."/>
            <person name="Rieger M."/>
            <person name="Rivolta C."/>
            <person name="Rocha E."/>
            <person name="Roche B."/>
            <person name="Rose M."/>
            <person name="Sadaie Y."/>
            <person name="Sato T."/>
            <person name="Scanlan E."/>
            <person name="Schleich S."/>
            <person name="Schroeter R."/>
            <person name="Scoffone F."/>
            <person name="Sekiguchi J."/>
            <person name="Sekowska A."/>
            <person name="Seror S.J."/>
            <person name="Serror P."/>
            <person name="Shin B.-S."/>
            <person name="Soldo B."/>
            <person name="Sorokin A."/>
            <person name="Tacconi E."/>
            <person name="Takagi T."/>
            <person name="Takahashi H."/>
            <person name="Takemaru K."/>
            <person name="Takeuchi M."/>
            <person name="Tamakoshi A."/>
            <person name="Tanaka T."/>
            <person name="Terpstra P."/>
            <person name="Tognoni A."/>
            <person name="Tosato V."/>
            <person name="Uchiyama S."/>
            <person name="Vandenbol M."/>
            <person name="Vannier F."/>
            <person name="Vassarotti A."/>
            <person name="Viari A."/>
            <person name="Wambutt R."/>
            <person name="Wedler E."/>
            <person name="Wedler H."/>
            <person name="Weitzenegger T."/>
            <person name="Winters P."/>
            <person name="Wipat A."/>
            <person name="Yamamoto H."/>
            <person name="Yamane K."/>
            <person name="Yasumoto K."/>
            <person name="Yata K."/>
            <person name="Yoshida K."/>
            <person name="Yoshikawa H.-F."/>
            <person name="Zumstein E."/>
            <person name="Yoshikawa H."/>
            <person name="Danchin A."/>
        </authorList>
    </citation>
    <scope>NUCLEOTIDE SEQUENCE [LARGE SCALE GENOMIC DNA]</scope>
    <source>
        <strain>168</strain>
    </source>
</reference>
<reference key="5">
    <citation type="journal article" date="2009" name="Microbiology">
        <title>From a consortium sequence to a unified sequence: the Bacillus subtilis 168 reference genome a decade later.</title>
        <authorList>
            <person name="Barbe V."/>
            <person name="Cruveiller S."/>
            <person name="Kunst F."/>
            <person name="Lenoble P."/>
            <person name="Meurice G."/>
            <person name="Sekowska A."/>
            <person name="Vallenet D."/>
            <person name="Wang T."/>
            <person name="Moszer I."/>
            <person name="Medigue C."/>
            <person name="Danchin A."/>
        </authorList>
    </citation>
    <scope>SEQUENCE REVISION TO 262-265</scope>
</reference>
<keyword id="KW-0378">Hydrolase</keyword>
<keyword id="KW-0464">Manganese</keyword>
<keyword id="KW-1185">Reference proteome</keyword>
<sequence>MNKEALVNRLNASAKRQKADIVIKNGKIMDVYNQEWIYEDIAITDGVIVGLGEYEGENIIDAEGQMIVPGFIDGHVHIESSMVTPIEFAKAVLPHGVTTVVTDPHEIANVSGEKGIEFMLEQARHTPLNIHFMLPSSVPAASFERSGAILKAADLKPFYEEEEVLGLAEVMDYVSVQQAEKDMVQKLLDARVAGKRIDGHLAGLSTDLINIYRTAFVLNDHEVTSKEEALDRIRRGMYVMMREGSVAKNTLNVLPAVNEKNARRFFFCTDDKHVDDLLSEGSVNHQVKMAIQAGLNPFLAYQLGSLNAAECYGLDTKGAIAPGFDADLLFVSDLENVTVTMTMVKGQTVAEDSKAVYQDHASTAAPDQALLDSVKLAAPLNKQDFHMPIDSEQQINVIQIIPNQLETRLVQVPAPVAREFEPDTELDLLKIAVVERHKGLKETGLGVVKGFGFKSGAIATTISHDSHNIIAVGTNDEDIAAAVNKLQEIGGGLTIIKNGEELHSVPLPIAGLLSDQSAEQVNQSLLTLHDKLSLIGFTGGFNPFLTLSFLALPVIPDIKMTTTGLFDVKSFQHISLQ</sequence>
<dbReference type="EC" id="3.5.4.2"/>
<dbReference type="EMBL" id="D37799">
    <property type="protein sequence ID" value="BAA07052.1"/>
    <property type="molecule type" value="Genomic_DNA"/>
</dbReference>
<dbReference type="EMBL" id="X83795">
    <property type="protein sequence ID" value="CAA58726.1"/>
    <property type="molecule type" value="Genomic_DNA"/>
</dbReference>
<dbReference type="EMBL" id="AF012285">
    <property type="protein sequence ID" value="AAC24927.1"/>
    <property type="molecule type" value="Genomic_DNA"/>
</dbReference>
<dbReference type="EMBL" id="AL009126">
    <property type="protein sequence ID" value="CAB13325.2"/>
    <property type="molecule type" value="Genomic_DNA"/>
</dbReference>
<dbReference type="PIR" id="B69583">
    <property type="entry name" value="B69583"/>
</dbReference>
<dbReference type="RefSeq" id="NP_389335.2">
    <property type="nucleotide sequence ID" value="NC_000964.3"/>
</dbReference>
<dbReference type="RefSeq" id="WP_003245362.1">
    <property type="nucleotide sequence ID" value="NZ_OZ025638.1"/>
</dbReference>
<dbReference type="SMR" id="P39761"/>
<dbReference type="FunCoup" id="P39761">
    <property type="interactions" value="176"/>
</dbReference>
<dbReference type="STRING" id="224308.BSU14520"/>
<dbReference type="PaxDb" id="224308-BSU14520"/>
<dbReference type="EnsemblBacteria" id="CAB13325">
    <property type="protein sequence ID" value="CAB13325"/>
    <property type="gene ID" value="BSU_14520"/>
</dbReference>
<dbReference type="GeneID" id="939477"/>
<dbReference type="KEGG" id="bsu:BSU14520"/>
<dbReference type="PATRIC" id="fig|224308.179.peg.1582"/>
<dbReference type="eggNOG" id="COG1001">
    <property type="taxonomic scope" value="Bacteria"/>
</dbReference>
<dbReference type="InParanoid" id="P39761"/>
<dbReference type="OrthoDB" id="9775607at2"/>
<dbReference type="PhylomeDB" id="P39761"/>
<dbReference type="BioCyc" id="BSUB:BSU14520-MONOMER"/>
<dbReference type="BioCyc" id="MetaCyc:BSU14520-MONOMER"/>
<dbReference type="Proteomes" id="UP000001570">
    <property type="component" value="Chromosome"/>
</dbReference>
<dbReference type="GO" id="GO:0000034">
    <property type="term" value="F:adenine deaminase activity"/>
    <property type="evidence" value="ECO:0000318"/>
    <property type="project" value="GO_Central"/>
</dbReference>
<dbReference type="GO" id="GO:0006146">
    <property type="term" value="P:adenine catabolic process"/>
    <property type="evidence" value="ECO:0007669"/>
    <property type="project" value="InterPro"/>
</dbReference>
<dbReference type="CDD" id="cd01295">
    <property type="entry name" value="AdeC"/>
    <property type="match status" value="1"/>
</dbReference>
<dbReference type="FunFam" id="2.30.40.10:FF:000059">
    <property type="entry name" value="Adenine deaminase"/>
    <property type="match status" value="1"/>
</dbReference>
<dbReference type="FunFam" id="3.20.20.140:FF:000016">
    <property type="entry name" value="Adenine deaminase"/>
    <property type="match status" value="1"/>
</dbReference>
<dbReference type="Gene3D" id="3.20.20.140">
    <property type="entry name" value="Metal-dependent hydrolases"/>
    <property type="match status" value="1"/>
</dbReference>
<dbReference type="Gene3D" id="2.30.40.10">
    <property type="entry name" value="Urease, subunit C, domain 1"/>
    <property type="match status" value="1"/>
</dbReference>
<dbReference type="HAMAP" id="MF_01518">
    <property type="entry name" value="Adenine_deamin"/>
    <property type="match status" value="1"/>
</dbReference>
<dbReference type="InterPro" id="IPR006679">
    <property type="entry name" value="Adenine_deam"/>
</dbReference>
<dbReference type="InterPro" id="IPR026912">
    <property type="entry name" value="Adenine_deam_C"/>
</dbReference>
<dbReference type="InterPro" id="IPR006680">
    <property type="entry name" value="Amidohydro-rel"/>
</dbReference>
<dbReference type="InterPro" id="IPR011059">
    <property type="entry name" value="Metal-dep_hydrolase_composite"/>
</dbReference>
<dbReference type="InterPro" id="IPR032466">
    <property type="entry name" value="Metal_Hydrolase"/>
</dbReference>
<dbReference type="NCBIfam" id="TIGR01178">
    <property type="entry name" value="ade"/>
    <property type="match status" value="1"/>
</dbReference>
<dbReference type="PANTHER" id="PTHR11113:SF2">
    <property type="entry name" value="ADENINE DEAMINASE"/>
    <property type="match status" value="1"/>
</dbReference>
<dbReference type="PANTHER" id="PTHR11113">
    <property type="entry name" value="N-ACETYLGLUCOSAMINE-6-PHOSPHATE DEACETYLASE"/>
    <property type="match status" value="1"/>
</dbReference>
<dbReference type="Pfam" id="PF13382">
    <property type="entry name" value="Adenine_deam_C"/>
    <property type="match status" value="1"/>
</dbReference>
<dbReference type="Pfam" id="PF01979">
    <property type="entry name" value="Amidohydro_1"/>
    <property type="match status" value="1"/>
</dbReference>
<dbReference type="SUPFAM" id="SSF51338">
    <property type="entry name" value="Composite domain of metallo-dependent hydrolases"/>
    <property type="match status" value="1"/>
</dbReference>
<dbReference type="SUPFAM" id="SSF51556">
    <property type="entry name" value="Metallo-dependent hydrolases"/>
    <property type="match status" value="1"/>
</dbReference>
<gene>
    <name type="primary">adeC</name>
    <name type="synonym">ade</name>
    <name type="synonym">yzaD</name>
    <name type="ordered locus">BSU14520</name>
</gene>
<name>ADEC_BACSU</name>